<sequence>MEWSLTQNKLLAFHRLMRTDKPIGALLLLWPTLWALWVATPGVPQLWILAVFVAGVWLMRAAGCVVNDYADRKFDGHVKRTANRPLPSGAVTEKEARALFVVLVLISFLLVLTLNTMTILLSIAALALAWVYPFMKRYTHLPQVVLGAAFGWSIPMAFAAVSESVPLSCWLMFLANILWAVAYDTQYAMVDRDDDVKIGIKSTAILFGQYDKLIIGILQIGVLALMAIIGELNGLGWGYYWSILVAGALFVYQQKLIANREREACFKAFMNNNYVGLVLFLGLAMSYWHF</sequence>
<dbReference type="EC" id="2.5.1.39" evidence="1"/>
<dbReference type="EMBL" id="CP000800">
    <property type="protein sequence ID" value="ABV18752.1"/>
    <property type="molecule type" value="Genomic_DNA"/>
</dbReference>
<dbReference type="RefSeq" id="WP_000455227.1">
    <property type="nucleotide sequence ID" value="NC_009801.1"/>
</dbReference>
<dbReference type="SMR" id="A7ZUR2"/>
<dbReference type="GeneID" id="93777791"/>
<dbReference type="KEGG" id="ecw:EcE24377A_4593"/>
<dbReference type="HOGENOM" id="CLU_034879_1_0_6"/>
<dbReference type="UniPathway" id="UPA00232"/>
<dbReference type="Proteomes" id="UP000001122">
    <property type="component" value="Chromosome"/>
</dbReference>
<dbReference type="GO" id="GO:0005886">
    <property type="term" value="C:plasma membrane"/>
    <property type="evidence" value="ECO:0007669"/>
    <property type="project" value="UniProtKB-SubCell"/>
</dbReference>
<dbReference type="GO" id="GO:0008412">
    <property type="term" value="F:4-hydroxybenzoate polyprenyltransferase activity"/>
    <property type="evidence" value="ECO:0007669"/>
    <property type="project" value="UniProtKB-UniRule"/>
</dbReference>
<dbReference type="GO" id="GO:0006744">
    <property type="term" value="P:ubiquinone biosynthetic process"/>
    <property type="evidence" value="ECO:0007669"/>
    <property type="project" value="UniProtKB-UniRule"/>
</dbReference>
<dbReference type="CDD" id="cd13959">
    <property type="entry name" value="PT_UbiA_COQ2"/>
    <property type="match status" value="1"/>
</dbReference>
<dbReference type="FunFam" id="1.10.357.140:FF:000002">
    <property type="entry name" value="4-hydroxybenzoate octaprenyltransferase"/>
    <property type="match status" value="1"/>
</dbReference>
<dbReference type="FunFam" id="1.20.120.1780:FF:000001">
    <property type="entry name" value="4-hydroxybenzoate octaprenyltransferase"/>
    <property type="match status" value="1"/>
</dbReference>
<dbReference type="Gene3D" id="1.10.357.140">
    <property type="entry name" value="UbiA prenyltransferase"/>
    <property type="match status" value="1"/>
</dbReference>
<dbReference type="Gene3D" id="1.20.120.1780">
    <property type="entry name" value="UbiA prenyltransferase"/>
    <property type="match status" value="1"/>
</dbReference>
<dbReference type="HAMAP" id="MF_01635">
    <property type="entry name" value="UbiA"/>
    <property type="match status" value="1"/>
</dbReference>
<dbReference type="InterPro" id="IPR006370">
    <property type="entry name" value="HB_polyprenyltransferase-like"/>
</dbReference>
<dbReference type="InterPro" id="IPR039653">
    <property type="entry name" value="Prenyltransferase"/>
</dbReference>
<dbReference type="InterPro" id="IPR000537">
    <property type="entry name" value="UbiA_prenyltransferase"/>
</dbReference>
<dbReference type="InterPro" id="IPR030470">
    <property type="entry name" value="UbiA_prenylTrfase_CS"/>
</dbReference>
<dbReference type="InterPro" id="IPR044878">
    <property type="entry name" value="UbiA_sf"/>
</dbReference>
<dbReference type="NCBIfam" id="TIGR01474">
    <property type="entry name" value="ubiA_proteo"/>
    <property type="match status" value="1"/>
</dbReference>
<dbReference type="PANTHER" id="PTHR11048:SF28">
    <property type="entry name" value="4-HYDROXYBENZOATE POLYPRENYLTRANSFERASE, MITOCHONDRIAL"/>
    <property type="match status" value="1"/>
</dbReference>
<dbReference type="PANTHER" id="PTHR11048">
    <property type="entry name" value="PRENYLTRANSFERASES"/>
    <property type="match status" value="1"/>
</dbReference>
<dbReference type="Pfam" id="PF01040">
    <property type="entry name" value="UbiA"/>
    <property type="match status" value="1"/>
</dbReference>
<dbReference type="PROSITE" id="PS00943">
    <property type="entry name" value="UBIA"/>
    <property type="match status" value="1"/>
</dbReference>
<feature type="chain" id="PRO_1000069815" description="4-hydroxybenzoate octaprenyltransferase">
    <location>
        <begin position="1"/>
        <end position="290"/>
    </location>
</feature>
<feature type="transmembrane region" description="Helical" evidence="1">
    <location>
        <begin position="23"/>
        <end position="43"/>
    </location>
</feature>
<feature type="transmembrane region" description="Helical" evidence="1">
    <location>
        <begin position="46"/>
        <end position="66"/>
    </location>
</feature>
<feature type="transmembrane region" description="Helical" evidence="1">
    <location>
        <begin position="99"/>
        <end position="119"/>
    </location>
</feature>
<feature type="transmembrane region" description="Helical" evidence="1">
    <location>
        <begin position="141"/>
        <end position="161"/>
    </location>
</feature>
<feature type="transmembrane region" description="Helical" evidence="1">
    <location>
        <begin position="163"/>
        <end position="183"/>
    </location>
</feature>
<feature type="transmembrane region" description="Helical" evidence="1">
    <location>
        <begin position="213"/>
        <end position="233"/>
    </location>
</feature>
<feature type="transmembrane region" description="Helical" evidence="1">
    <location>
        <begin position="234"/>
        <end position="254"/>
    </location>
</feature>
<feature type="transmembrane region" description="Helical" evidence="1">
    <location>
        <begin position="268"/>
        <end position="288"/>
    </location>
</feature>
<organism>
    <name type="scientific">Escherichia coli O139:H28 (strain E24377A / ETEC)</name>
    <dbReference type="NCBI Taxonomy" id="331111"/>
    <lineage>
        <taxon>Bacteria</taxon>
        <taxon>Pseudomonadati</taxon>
        <taxon>Pseudomonadota</taxon>
        <taxon>Gammaproteobacteria</taxon>
        <taxon>Enterobacterales</taxon>
        <taxon>Enterobacteriaceae</taxon>
        <taxon>Escherichia</taxon>
    </lineage>
</organism>
<protein>
    <recommendedName>
        <fullName evidence="1">4-hydroxybenzoate octaprenyltransferase</fullName>
        <ecNumber evidence="1">2.5.1.39</ecNumber>
    </recommendedName>
    <alternativeName>
        <fullName evidence="1">4-HB polyprenyltransferase</fullName>
    </alternativeName>
</protein>
<comment type="function">
    <text evidence="1">Catalyzes the prenylation of para-hydroxybenzoate (PHB) with an all-trans polyprenyl group. Mediates the second step in the final reaction sequence of ubiquinone-8 (UQ-8) biosynthesis, which is the condensation of the polyisoprenoid side chain with PHB, generating the first membrane-bound Q intermediate 3-octaprenyl-4-hydroxybenzoate.</text>
</comment>
<comment type="catalytic activity">
    <reaction evidence="1">
        <text>all-trans-octaprenyl diphosphate + 4-hydroxybenzoate = 4-hydroxy-3-(all-trans-octaprenyl)benzoate + diphosphate</text>
        <dbReference type="Rhea" id="RHEA:27782"/>
        <dbReference type="ChEBI" id="CHEBI:1617"/>
        <dbReference type="ChEBI" id="CHEBI:17879"/>
        <dbReference type="ChEBI" id="CHEBI:33019"/>
        <dbReference type="ChEBI" id="CHEBI:57711"/>
        <dbReference type="EC" id="2.5.1.39"/>
    </reaction>
</comment>
<comment type="cofactor">
    <cofactor evidence="1">
        <name>Mg(2+)</name>
        <dbReference type="ChEBI" id="CHEBI:18420"/>
    </cofactor>
</comment>
<comment type="pathway">
    <text evidence="1">Cofactor biosynthesis; ubiquinone biosynthesis.</text>
</comment>
<comment type="subcellular location">
    <subcellularLocation>
        <location evidence="1">Cell inner membrane</location>
        <topology evidence="1">Multi-pass membrane protein</topology>
    </subcellularLocation>
</comment>
<comment type="similarity">
    <text evidence="1">Belongs to the UbiA prenyltransferase family.</text>
</comment>
<proteinExistence type="inferred from homology"/>
<name>UBIA_ECO24</name>
<reference key="1">
    <citation type="journal article" date="2008" name="J. Bacteriol.">
        <title>The pangenome structure of Escherichia coli: comparative genomic analysis of E. coli commensal and pathogenic isolates.</title>
        <authorList>
            <person name="Rasko D.A."/>
            <person name="Rosovitz M.J."/>
            <person name="Myers G.S.A."/>
            <person name="Mongodin E.F."/>
            <person name="Fricke W.F."/>
            <person name="Gajer P."/>
            <person name="Crabtree J."/>
            <person name="Sebaihia M."/>
            <person name="Thomson N.R."/>
            <person name="Chaudhuri R."/>
            <person name="Henderson I.R."/>
            <person name="Sperandio V."/>
            <person name="Ravel J."/>
        </authorList>
    </citation>
    <scope>NUCLEOTIDE SEQUENCE [LARGE SCALE GENOMIC DNA]</scope>
    <source>
        <strain>E24377A / ETEC</strain>
    </source>
</reference>
<accession>A7ZUR2</accession>
<gene>
    <name evidence="1" type="primary">ubiA</name>
    <name type="ordered locus">EcE24377A_4593</name>
</gene>
<keyword id="KW-0997">Cell inner membrane</keyword>
<keyword id="KW-1003">Cell membrane</keyword>
<keyword id="KW-0460">Magnesium</keyword>
<keyword id="KW-0472">Membrane</keyword>
<keyword id="KW-1185">Reference proteome</keyword>
<keyword id="KW-0808">Transferase</keyword>
<keyword id="KW-0812">Transmembrane</keyword>
<keyword id="KW-1133">Transmembrane helix</keyword>
<keyword id="KW-0831">Ubiquinone biosynthesis</keyword>
<evidence type="ECO:0000255" key="1">
    <source>
        <dbReference type="HAMAP-Rule" id="MF_01635"/>
    </source>
</evidence>